<proteinExistence type="inferred from homology"/>
<gene>
    <name evidence="1" type="primary">rplX</name>
    <name type="ordered locus">Hore_01280</name>
</gene>
<dbReference type="EMBL" id="CP001098">
    <property type="protein sequence ID" value="ACL68889.1"/>
    <property type="molecule type" value="Genomic_DNA"/>
</dbReference>
<dbReference type="RefSeq" id="WP_012635087.1">
    <property type="nucleotide sequence ID" value="NC_011899.1"/>
</dbReference>
<dbReference type="SMR" id="B8D0D5"/>
<dbReference type="STRING" id="373903.Hore_01280"/>
<dbReference type="KEGG" id="hor:Hore_01280"/>
<dbReference type="eggNOG" id="COG0198">
    <property type="taxonomic scope" value="Bacteria"/>
</dbReference>
<dbReference type="HOGENOM" id="CLU_093315_2_0_9"/>
<dbReference type="OrthoDB" id="9807419at2"/>
<dbReference type="Proteomes" id="UP000000719">
    <property type="component" value="Chromosome"/>
</dbReference>
<dbReference type="GO" id="GO:1990904">
    <property type="term" value="C:ribonucleoprotein complex"/>
    <property type="evidence" value="ECO:0007669"/>
    <property type="project" value="UniProtKB-KW"/>
</dbReference>
<dbReference type="GO" id="GO:0005840">
    <property type="term" value="C:ribosome"/>
    <property type="evidence" value="ECO:0007669"/>
    <property type="project" value="UniProtKB-KW"/>
</dbReference>
<dbReference type="GO" id="GO:0019843">
    <property type="term" value="F:rRNA binding"/>
    <property type="evidence" value="ECO:0007669"/>
    <property type="project" value="UniProtKB-UniRule"/>
</dbReference>
<dbReference type="GO" id="GO:0003735">
    <property type="term" value="F:structural constituent of ribosome"/>
    <property type="evidence" value="ECO:0007669"/>
    <property type="project" value="InterPro"/>
</dbReference>
<dbReference type="GO" id="GO:0006412">
    <property type="term" value="P:translation"/>
    <property type="evidence" value="ECO:0007669"/>
    <property type="project" value="UniProtKB-UniRule"/>
</dbReference>
<dbReference type="CDD" id="cd06089">
    <property type="entry name" value="KOW_RPL26"/>
    <property type="match status" value="1"/>
</dbReference>
<dbReference type="FunFam" id="2.30.30.30:FF:000004">
    <property type="entry name" value="50S ribosomal protein L24"/>
    <property type="match status" value="1"/>
</dbReference>
<dbReference type="Gene3D" id="2.30.30.30">
    <property type="match status" value="1"/>
</dbReference>
<dbReference type="HAMAP" id="MF_01326_B">
    <property type="entry name" value="Ribosomal_uL24_B"/>
    <property type="match status" value="1"/>
</dbReference>
<dbReference type="InterPro" id="IPR005824">
    <property type="entry name" value="KOW"/>
</dbReference>
<dbReference type="InterPro" id="IPR014722">
    <property type="entry name" value="Rib_uL2_dom2"/>
</dbReference>
<dbReference type="InterPro" id="IPR003256">
    <property type="entry name" value="Ribosomal_uL24"/>
</dbReference>
<dbReference type="InterPro" id="IPR005825">
    <property type="entry name" value="Ribosomal_uL24_CS"/>
</dbReference>
<dbReference type="InterPro" id="IPR041988">
    <property type="entry name" value="Ribosomal_uL24_KOW"/>
</dbReference>
<dbReference type="InterPro" id="IPR008991">
    <property type="entry name" value="Translation_prot_SH3-like_sf"/>
</dbReference>
<dbReference type="NCBIfam" id="TIGR01079">
    <property type="entry name" value="rplX_bact"/>
    <property type="match status" value="1"/>
</dbReference>
<dbReference type="PANTHER" id="PTHR12903">
    <property type="entry name" value="MITOCHONDRIAL RIBOSOMAL PROTEIN L24"/>
    <property type="match status" value="1"/>
</dbReference>
<dbReference type="Pfam" id="PF00467">
    <property type="entry name" value="KOW"/>
    <property type="match status" value="1"/>
</dbReference>
<dbReference type="Pfam" id="PF17136">
    <property type="entry name" value="ribosomal_L24"/>
    <property type="match status" value="1"/>
</dbReference>
<dbReference type="SMART" id="SM00739">
    <property type="entry name" value="KOW"/>
    <property type="match status" value="1"/>
</dbReference>
<dbReference type="SUPFAM" id="SSF50104">
    <property type="entry name" value="Translation proteins SH3-like domain"/>
    <property type="match status" value="1"/>
</dbReference>
<dbReference type="PROSITE" id="PS01108">
    <property type="entry name" value="RIBOSOMAL_L24"/>
    <property type="match status" value="1"/>
</dbReference>
<name>RL24_HALOH</name>
<keyword id="KW-1185">Reference proteome</keyword>
<keyword id="KW-0687">Ribonucleoprotein</keyword>
<keyword id="KW-0689">Ribosomal protein</keyword>
<keyword id="KW-0694">RNA-binding</keyword>
<keyword id="KW-0699">rRNA-binding</keyword>
<organism>
    <name type="scientific">Halothermothrix orenii (strain H 168 / OCM 544 / DSM 9562)</name>
    <dbReference type="NCBI Taxonomy" id="373903"/>
    <lineage>
        <taxon>Bacteria</taxon>
        <taxon>Bacillati</taxon>
        <taxon>Bacillota</taxon>
        <taxon>Clostridia</taxon>
        <taxon>Halanaerobiales</taxon>
        <taxon>Halothermotrichaceae</taxon>
        <taxon>Halothermothrix</taxon>
    </lineage>
</organism>
<sequence>MRVKKGDLVEVIAGKDRGKRGKVLRVIPREDRVIVEGINIVHRHMRPTPDMPQGGIVKNEAPIHISNVMLVCPNCDEKTRIGATYLEDGQKVRKCKKCDEVVDK</sequence>
<comment type="function">
    <text evidence="1">One of two assembly initiator proteins, it binds directly to the 5'-end of the 23S rRNA, where it nucleates assembly of the 50S subunit.</text>
</comment>
<comment type="function">
    <text evidence="1">One of the proteins that surrounds the polypeptide exit tunnel on the outside of the subunit.</text>
</comment>
<comment type="subunit">
    <text evidence="1">Part of the 50S ribosomal subunit.</text>
</comment>
<comment type="similarity">
    <text evidence="1">Belongs to the universal ribosomal protein uL24 family.</text>
</comment>
<reference key="1">
    <citation type="journal article" date="2009" name="PLoS ONE">
        <title>Genome analysis of the anaerobic thermohalophilic bacterium Halothermothrix orenii.</title>
        <authorList>
            <person name="Mavromatis K."/>
            <person name="Ivanova N."/>
            <person name="Anderson I."/>
            <person name="Lykidis A."/>
            <person name="Hooper S.D."/>
            <person name="Sun H."/>
            <person name="Kunin V."/>
            <person name="Lapidus A."/>
            <person name="Hugenholtz P."/>
            <person name="Patel B."/>
            <person name="Kyrpides N.C."/>
        </authorList>
    </citation>
    <scope>NUCLEOTIDE SEQUENCE [LARGE SCALE GENOMIC DNA]</scope>
    <source>
        <strain>H 168 / OCM 544 / DSM 9562</strain>
    </source>
</reference>
<accession>B8D0D5</accession>
<protein>
    <recommendedName>
        <fullName evidence="1">Large ribosomal subunit protein uL24</fullName>
    </recommendedName>
    <alternativeName>
        <fullName evidence="2">50S ribosomal protein L24</fullName>
    </alternativeName>
</protein>
<feature type="chain" id="PRO_1000214547" description="Large ribosomal subunit protein uL24">
    <location>
        <begin position="1"/>
        <end position="104"/>
    </location>
</feature>
<evidence type="ECO:0000255" key="1">
    <source>
        <dbReference type="HAMAP-Rule" id="MF_01326"/>
    </source>
</evidence>
<evidence type="ECO:0000305" key="2"/>